<reference key="1">
    <citation type="journal article" date="2007" name="PLoS Genet.">
        <title>Meningococcal genetic variation mechanisms viewed through comparative analysis of serogroup C strain FAM18.</title>
        <authorList>
            <person name="Bentley S.D."/>
            <person name="Vernikos G.S."/>
            <person name="Snyder L.A.S."/>
            <person name="Churcher C."/>
            <person name="Arrowsmith C."/>
            <person name="Chillingworth T."/>
            <person name="Cronin A."/>
            <person name="Davis P.H."/>
            <person name="Holroyd N.E."/>
            <person name="Jagels K."/>
            <person name="Maddison M."/>
            <person name="Moule S."/>
            <person name="Rabbinowitsch E."/>
            <person name="Sharp S."/>
            <person name="Unwin L."/>
            <person name="Whitehead S."/>
            <person name="Quail M.A."/>
            <person name="Achtman M."/>
            <person name="Barrell B.G."/>
            <person name="Saunders N.J."/>
            <person name="Parkhill J."/>
        </authorList>
    </citation>
    <scope>NUCLEOTIDE SEQUENCE [LARGE SCALE GENOMIC DNA]</scope>
    <source>
        <strain>ATCC 700532 / DSM 15464 / FAM18</strain>
    </source>
</reference>
<evidence type="ECO:0000255" key="1">
    <source>
        <dbReference type="HAMAP-Rule" id="MF_00089"/>
    </source>
</evidence>
<name>THIC_NEIMF</name>
<gene>
    <name evidence="1" type="primary">thiC</name>
    <name type="ordered locus">NMC2021</name>
</gene>
<dbReference type="EC" id="4.1.99.17" evidence="1"/>
<dbReference type="EMBL" id="AM421808">
    <property type="protein sequence ID" value="CAM11177.1"/>
    <property type="molecule type" value="Genomic_DNA"/>
</dbReference>
<dbReference type="RefSeq" id="WP_002224691.1">
    <property type="nucleotide sequence ID" value="NC_008767.1"/>
</dbReference>
<dbReference type="SMR" id="A1KWC0"/>
<dbReference type="KEGG" id="nmc:NMC2021"/>
<dbReference type="HOGENOM" id="CLU_013181_2_1_4"/>
<dbReference type="UniPathway" id="UPA00060"/>
<dbReference type="Proteomes" id="UP000002286">
    <property type="component" value="Chromosome"/>
</dbReference>
<dbReference type="GO" id="GO:0005829">
    <property type="term" value="C:cytosol"/>
    <property type="evidence" value="ECO:0007669"/>
    <property type="project" value="TreeGrafter"/>
</dbReference>
<dbReference type="GO" id="GO:0051539">
    <property type="term" value="F:4 iron, 4 sulfur cluster binding"/>
    <property type="evidence" value="ECO:0007669"/>
    <property type="project" value="UniProtKB-KW"/>
</dbReference>
<dbReference type="GO" id="GO:0016830">
    <property type="term" value="F:carbon-carbon lyase activity"/>
    <property type="evidence" value="ECO:0007669"/>
    <property type="project" value="InterPro"/>
</dbReference>
<dbReference type="GO" id="GO:0008270">
    <property type="term" value="F:zinc ion binding"/>
    <property type="evidence" value="ECO:0007669"/>
    <property type="project" value="UniProtKB-UniRule"/>
</dbReference>
<dbReference type="GO" id="GO:0009228">
    <property type="term" value="P:thiamine biosynthetic process"/>
    <property type="evidence" value="ECO:0007669"/>
    <property type="project" value="UniProtKB-KW"/>
</dbReference>
<dbReference type="GO" id="GO:0009229">
    <property type="term" value="P:thiamine diphosphate biosynthetic process"/>
    <property type="evidence" value="ECO:0007669"/>
    <property type="project" value="UniProtKB-UniRule"/>
</dbReference>
<dbReference type="FunFam" id="3.20.20.540:FF:000001">
    <property type="entry name" value="Phosphomethylpyrimidine synthase"/>
    <property type="match status" value="1"/>
</dbReference>
<dbReference type="Gene3D" id="6.10.250.620">
    <property type="match status" value="1"/>
</dbReference>
<dbReference type="Gene3D" id="3.20.20.540">
    <property type="entry name" value="Radical SAM ThiC family, central domain"/>
    <property type="match status" value="1"/>
</dbReference>
<dbReference type="HAMAP" id="MF_00089">
    <property type="entry name" value="ThiC"/>
    <property type="match status" value="1"/>
</dbReference>
<dbReference type="InterPro" id="IPR037509">
    <property type="entry name" value="ThiC"/>
</dbReference>
<dbReference type="InterPro" id="IPR025747">
    <property type="entry name" value="ThiC-associated_dom"/>
</dbReference>
<dbReference type="InterPro" id="IPR038521">
    <property type="entry name" value="ThiC/Bza_core_dom"/>
</dbReference>
<dbReference type="InterPro" id="IPR002817">
    <property type="entry name" value="ThiC/BzaA/B"/>
</dbReference>
<dbReference type="NCBIfam" id="NF006763">
    <property type="entry name" value="PRK09284.1"/>
    <property type="match status" value="1"/>
</dbReference>
<dbReference type="NCBIfam" id="NF009895">
    <property type="entry name" value="PRK13352.1"/>
    <property type="match status" value="1"/>
</dbReference>
<dbReference type="NCBIfam" id="TIGR00190">
    <property type="entry name" value="thiC"/>
    <property type="match status" value="1"/>
</dbReference>
<dbReference type="PANTHER" id="PTHR30557:SF1">
    <property type="entry name" value="PHOSPHOMETHYLPYRIMIDINE SYNTHASE, CHLOROPLASTIC"/>
    <property type="match status" value="1"/>
</dbReference>
<dbReference type="PANTHER" id="PTHR30557">
    <property type="entry name" value="THIAMINE BIOSYNTHESIS PROTEIN THIC"/>
    <property type="match status" value="1"/>
</dbReference>
<dbReference type="Pfam" id="PF13667">
    <property type="entry name" value="ThiC-associated"/>
    <property type="match status" value="1"/>
</dbReference>
<dbReference type="Pfam" id="PF01964">
    <property type="entry name" value="ThiC_Rad_SAM"/>
    <property type="match status" value="1"/>
</dbReference>
<dbReference type="SFLD" id="SFLDF00407">
    <property type="entry name" value="phosphomethylpyrimidine_syntha"/>
    <property type="match status" value="1"/>
</dbReference>
<dbReference type="SFLD" id="SFLDG01114">
    <property type="entry name" value="phosphomethylpyrimidine_syntha"/>
    <property type="match status" value="1"/>
</dbReference>
<dbReference type="SFLD" id="SFLDS00113">
    <property type="entry name" value="Radical_SAM_Phosphomethylpyrim"/>
    <property type="match status" value="1"/>
</dbReference>
<feature type="chain" id="PRO_1000004781" description="Phosphomethylpyrimidine synthase">
    <location>
        <begin position="1"/>
        <end position="633"/>
    </location>
</feature>
<feature type="binding site" evidence="1">
    <location>
        <position position="245"/>
    </location>
    <ligand>
        <name>substrate</name>
    </ligand>
</feature>
<feature type="binding site" evidence="1">
    <location>
        <position position="274"/>
    </location>
    <ligand>
        <name>substrate</name>
    </ligand>
</feature>
<feature type="binding site" evidence="1">
    <location>
        <position position="303"/>
    </location>
    <ligand>
        <name>substrate</name>
    </ligand>
</feature>
<feature type="binding site" evidence="1">
    <location>
        <position position="339"/>
    </location>
    <ligand>
        <name>substrate</name>
    </ligand>
</feature>
<feature type="binding site" evidence="1">
    <location>
        <begin position="359"/>
        <end position="361"/>
    </location>
    <ligand>
        <name>substrate</name>
    </ligand>
</feature>
<feature type="binding site" evidence="1">
    <location>
        <begin position="400"/>
        <end position="403"/>
    </location>
    <ligand>
        <name>substrate</name>
    </ligand>
</feature>
<feature type="binding site" evidence="1">
    <location>
        <position position="439"/>
    </location>
    <ligand>
        <name>substrate</name>
    </ligand>
</feature>
<feature type="binding site" evidence="1">
    <location>
        <position position="443"/>
    </location>
    <ligand>
        <name>Zn(2+)</name>
        <dbReference type="ChEBI" id="CHEBI:29105"/>
    </ligand>
</feature>
<feature type="binding site" evidence="1">
    <location>
        <position position="466"/>
    </location>
    <ligand>
        <name>substrate</name>
    </ligand>
</feature>
<feature type="binding site" evidence="1">
    <location>
        <position position="507"/>
    </location>
    <ligand>
        <name>Zn(2+)</name>
        <dbReference type="ChEBI" id="CHEBI:29105"/>
    </ligand>
</feature>
<feature type="binding site" evidence="1">
    <location>
        <position position="587"/>
    </location>
    <ligand>
        <name>[4Fe-4S] cluster</name>
        <dbReference type="ChEBI" id="CHEBI:49883"/>
        <note>4Fe-4S-S-AdoMet</note>
    </ligand>
</feature>
<feature type="binding site" evidence="1">
    <location>
        <position position="590"/>
    </location>
    <ligand>
        <name>[4Fe-4S] cluster</name>
        <dbReference type="ChEBI" id="CHEBI:49883"/>
        <note>4Fe-4S-S-AdoMet</note>
    </ligand>
</feature>
<feature type="binding site" evidence="1">
    <location>
        <position position="595"/>
    </location>
    <ligand>
        <name>[4Fe-4S] cluster</name>
        <dbReference type="ChEBI" id="CHEBI:49883"/>
        <note>4Fe-4S-S-AdoMet</note>
    </ligand>
</feature>
<proteinExistence type="inferred from homology"/>
<organism>
    <name type="scientific">Neisseria meningitidis serogroup C / serotype 2a (strain ATCC 700532 / DSM 15464 / FAM18)</name>
    <dbReference type="NCBI Taxonomy" id="272831"/>
    <lineage>
        <taxon>Bacteria</taxon>
        <taxon>Pseudomonadati</taxon>
        <taxon>Pseudomonadota</taxon>
        <taxon>Betaproteobacteria</taxon>
        <taxon>Neisseriales</taxon>
        <taxon>Neisseriaceae</taxon>
        <taxon>Neisseria</taxon>
    </lineage>
</organism>
<protein>
    <recommendedName>
        <fullName evidence="1">Phosphomethylpyrimidine synthase</fullName>
        <ecNumber evidence="1">4.1.99.17</ecNumber>
    </recommendedName>
    <alternativeName>
        <fullName evidence="1">Hydroxymethylpyrimidine phosphate synthase</fullName>
        <shortName evidence="1">HMP-P synthase</shortName>
        <shortName evidence="1">HMP-phosphate synthase</shortName>
        <shortName evidence="1">HMPP synthase</shortName>
    </alternativeName>
    <alternativeName>
        <fullName evidence="1">Thiamine biosynthesis protein ThiC</fullName>
    </alternativeName>
</protein>
<sequence length="633" mass="71056">MTTPKKTAKTSGNEARELADLSEDIGIRFKYPNSERVYLQGSRDDIRVPLREIRQDDTYTAQGAEANPPIPVYDTSGVYGDPAAHIDLKQGLPHIRTAWLNERGDTEILPKLSSEYGIERAHDPKTAHLRFNQITRPRRAKSGGNVTQLHYARRGIITPEMEFVAIRERLKLDELSQKSEYAKLLKQHAGQSFGANIPTHPDQITPEFVRREIAAGRAIIPANINHPELEPMIIGRNFRVKINGNLGNSAVTSSLTEEVEKMVWSLRWGADTIMDLSTGAHIHETREWIIRNAPVPIGTVPIYQALEKTGGIAEDLTWDLFRDTLIEQAEQGVDYFTIHAGVLLRYVPMTADRLTGIVSRGGSIMAKWCLAHHRENFLYTHFDEICEIMKAYDVSFSLGDGLRPGCIADANDESQFAELHTLGELTSKAWKHDVQVMIEGPGHVPLQRVKENMTEELQHCFEAPFYTLGPLVTDIAPGYDHITSGIGAANIGWYGTAMLCYVTPKEHLGLPDKEDVRTGIITYKLAAHAADLAKGWPGAQLRDNALSKARFEFRWRDQFRLSLDPERAESFHDETLPAEGAKIAHFCSMCGPKFCSMKITQEVRDYADKQKAQRQGMEEKAVEFVKKGAKIYS</sequence>
<accession>A1KWC0</accession>
<keyword id="KW-0004">4Fe-4S</keyword>
<keyword id="KW-0408">Iron</keyword>
<keyword id="KW-0411">Iron-sulfur</keyword>
<keyword id="KW-0456">Lyase</keyword>
<keyword id="KW-0479">Metal-binding</keyword>
<keyword id="KW-0949">S-adenosyl-L-methionine</keyword>
<keyword id="KW-0784">Thiamine biosynthesis</keyword>
<keyword id="KW-0862">Zinc</keyword>
<comment type="function">
    <text evidence="1">Catalyzes the synthesis of the hydroxymethylpyrimidine phosphate (HMP-P) moiety of thiamine from aminoimidazole ribotide (AIR) in a radical S-adenosyl-L-methionine (SAM)-dependent reaction.</text>
</comment>
<comment type="catalytic activity">
    <reaction evidence="1">
        <text>5-amino-1-(5-phospho-beta-D-ribosyl)imidazole + S-adenosyl-L-methionine = 4-amino-2-methyl-5-(phosphooxymethyl)pyrimidine + CO + 5'-deoxyadenosine + formate + L-methionine + 3 H(+)</text>
        <dbReference type="Rhea" id="RHEA:24840"/>
        <dbReference type="ChEBI" id="CHEBI:15378"/>
        <dbReference type="ChEBI" id="CHEBI:15740"/>
        <dbReference type="ChEBI" id="CHEBI:17245"/>
        <dbReference type="ChEBI" id="CHEBI:17319"/>
        <dbReference type="ChEBI" id="CHEBI:57844"/>
        <dbReference type="ChEBI" id="CHEBI:58354"/>
        <dbReference type="ChEBI" id="CHEBI:59789"/>
        <dbReference type="ChEBI" id="CHEBI:137981"/>
        <dbReference type="EC" id="4.1.99.17"/>
    </reaction>
</comment>
<comment type="cofactor">
    <cofactor evidence="1">
        <name>[4Fe-4S] cluster</name>
        <dbReference type="ChEBI" id="CHEBI:49883"/>
    </cofactor>
    <text evidence="1">Binds 1 [4Fe-4S] cluster per subunit. The cluster is coordinated with 3 cysteines and an exchangeable S-adenosyl-L-methionine.</text>
</comment>
<comment type="pathway">
    <text evidence="1">Cofactor biosynthesis; thiamine diphosphate biosynthesis.</text>
</comment>
<comment type="subunit">
    <text evidence="1">Homodimer.</text>
</comment>
<comment type="similarity">
    <text evidence="1">Belongs to the ThiC family.</text>
</comment>